<keyword id="KW-0963">Cytoplasm</keyword>
<keyword id="KW-0489">Methyltransferase</keyword>
<keyword id="KW-0949">S-adenosyl-L-methionine</keyword>
<keyword id="KW-0808">Transferase</keyword>
<keyword id="KW-0819">tRNA processing</keyword>
<comment type="function">
    <text evidence="1">Specifically methylates guanosine-37 in various tRNAs.</text>
</comment>
<comment type="catalytic activity">
    <reaction evidence="1">
        <text>guanosine(37) in tRNA + S-adenosyl-L-methionine = N(1)-methylguanosine(37) in tRNA + S-adenosyl-L-homocysteine + H(+)</text>
        <dbReference type="Rhea" id="RHEA:36899"/>
        <dbReference type="Rhea" id="RHEA-COMP:10145"/>
        <dbReference type="Rhea" id="RHEA-COMP:10147"/>
        <dbReference type="ChEBI" id="CHEBI:15378"/>
        <dbReference type="ChEBI" id="CHEBI:57856"/>
        <dbReference type="ChEBI" id="CHEBI:59789"/>
        <dbReference type="ChEBI" id="CHEBI:73542"/>
        <dbReference type="ChEBI" id="CHEBI:74269"/>
        <dbReference type="EC" id="2.1.1.228"/>
    </reaction>
</comment>
<comment type="subunit">
    <text evidence="1">Homodimer.</text>
</comment>
<comment type="subcellular location">
    <subcellularLocation>
        <location evidence="1">Cytoplasm</location>
    </subcellularLocation>
</comment>
<comment type="similarity">
    <text evidence="1">Belongs to the RNA methyltransferase TrmD family.</text>
</comment>
<sequence length="244" mass="26827">MTDLPEKEGGRFHASVLTLYPEMFPGPLGISLAGKALAEGKWQLDTVQIRDFAEGRHRMVDDTPSGGGAGMVMKADVVARALDSVDDGRPMLLMTPRGKPLTQERVRALADGAGAIILCGRFEGVDERVIEGRNLEEISIGDYILSGGETAAIVLLDAVVRLLPGVMGNRESGETESFETGLLEHPHYTRPQEWEGRAIPDILTSGNHGAIDKWRLEQAERITRERRPDLWEAYCKNRRKIGGQ</sequence>
<accession>Q57AY4</accession>
<gene>
    <name evidence="1" type="primary">trmD</name>
    <name type="ordered locus">BruAb1_1890</name>
</gene>
<feature type="chain" id="PRO_0000060342" description="tRNA (guanine-N(1)-)-methyltransferase">
    <location>
        <begin position="1"/>
        <end position="244"/>
    </location>
</feature>
<feature type="binding site" evidence="1">
    <location>
        <position position="120"/>
    </location>
    <ligand>
        <name>S-adenosyl-L-methionine</name>
        <dbReference type="ChEBI" id="CHEBI:59789"/>
    </ligand>
</feature>
<feature type="binding site" evidence="1">
    <location>
        <begin position="140"/>
        <end position="145"/>
    </location>
    <ligand>
        <name>S-adenosyl-L-methionine</name>
        <dbReference type="ChEBI" id="CHEBI:59789"/>
    </ligand>
</feature>
<proteinExistence type="inferred from homology"/>
<evidence type="ECO:0000255" key="1">
    <source>
        <dbReference type="HAMAP-Rule" id="MF_00605"/>
    </source>
</evidence>
<reference key="1">
    <citation type="journal article" date="2005" name="J. Bacteriol.">
        <title>Completion of the genome sequence of Brucella abortus and comparison to the highly similar genomes of Brucella melitensis and Brucella suis.</title>
        <authorList>
            <person name="Halling S.M."/>
            <person name="Peterson-Burch B.D."/>
            <person name="Bricker B.J."/>
            <person name="Zuerner R.L."/>
            <person name="Qing Z."/>
            <person name="Li L.-L."/>
            <person name="Kapur V."/>
            <person name="Alt D.P."/>
            <person name="Olsen S.C."/>
        </authorList>
    </citation>
    <scope>NUCLEOTIDE SEQUENCE [LARGE SCALE GENOMIC DNA]</scope>
    <source>
        <strain>9-941</strain>
    </source>
</reference>
<dbReference type="EC" id="2.1.1.228" evidence="1"/>
<dbReference type="EMBL" id="AE017223">
    <property type="protein sequence ID" value="AAX75200.1"/>
    <property type="molecule type" value="Genomic_DNA"/>
</dbReference>
<dbReference type="RefSeq" id="WP_002964982.1">
    <property type="nucleotide sequence ID" value="NC_006932.1"/>
</dbReference>
<dbReference type="SMR" id="Q57AY4"/>
<dbReference type="EnsemblBacteria" id="AAX75200">
    <property type="protein sequence ID" value="AAX75200"/>
    <property type="gene ID" value="BruAb1_1890"/>
</dbReference>
<dbReference type="GeneID" id="97534799"/>
<dbReference type="KEGG" id="bmb:BruAb1_1890"/>
<dbReference type="HOGENOM" id="CLU_047363_0_1_5"/>
<dbReference type="Proteomes" id="UP000000540">
    <property type="component" value="Chromosome I"/>
</dbReference>
<dbReference type="GO" id="GO:0005829">
    <property type="term" value="C:cytosol"/>
    <property type="evidence" value="ECO:0007669"/>
    <property type="project" value="TreeGrafter"/>
</dbReference>
<dbReference type="GO" id="GO:0052906">
    <property type="term" value="F:tRNA (guanine(37)-N1)-methyltransferase activity"/>
    <property type="evidence" value="ECO:0007669"/>
    <property type="project" value="UniProtKB-UniRule"/>
</dbReference>
<dbReference type="GO" id="GO:0002939">
    <property type="term" value="P:tRNA N1-guanine methylation"/>
    <property type="evidence" value="ECO:0007669"/>
    <property type="project" value="TreeGrafter"/>
</dbReference>
<dbReference type="CDD" id="cd18080">
    <property type="entry name" value="TrmD-like"/>
    <property type="match status" value="1"/>
</dbReference>
<dbReference type="Gene3D" id="3.40.1280.10">
    <property type="match status" value="1"/>
</dbReference>
<dbReference type="Gene3D" id="1.10.1270.20">
    <property type="entry name" value="tRNA(m1g37)methyltransferase, domain 2"/>
    <property type="match status" value="1"/>
</dbReference>
<dbReference type="HAMAP" id="MF_00605">
    <property type="entry name" value="TrmD"/>
    <property type="match status" value="1"/>
</dbReference>
<dbReference type="InterPro" id="IPR029028">
    <property type="entry name" value="Alpha/beta_knot_MTases"/>
</dbReference>
<dbReference type="InterPro" id="IPR023148">
    <property type="entry name" value="tRNA_m1G_MeTrfase_C_sf"/>
</dbReference>
<dbReference type="InterPro" id="IPR002649">
    <property type="entry name" value="tRNA_m1G_MeTrfase_TrmD"/>
</dbReference>
<dbReference type="InterPro" id="IPR029026">
    <property type="entry name" value="tRNA_m1G_MTases_N"/>
</dbReference>
<dbReference type="InterPro" id="IPR016009">
    <property type="entry name" value="tRNA_MeTrfase_TRMD/TRM10"/>
</dbReference>
<dbReference type="NCBIfam" id="NF000648">
    <property type="entry name" value="PRK00026.1"/>
    <property type="match status" value="1"/>
</dbReference>
<dbReference type="NCBIfam" id="TIGR00088">
    <property type="entry name" value="trmD"/>
    <property type="match status" value="1"/>
</dbReference>
<dbReference type="PANTHER" id="PTHR46417">
    <property type="entry name" value="TRNA (GUANINE-N(1)-)-METHYLTRANSFERASE"/>
    <property type="match status" value="1"/>
</dbReference>
<dbReference type="PANTHER" id="PTHR46417:SF1">
    <property type="entry name" value="TRNA (GUANINE-N(1)-)-METHYLTRANSFERASE"/>
    <property type="match status" value="1"/>
</dbReference>
<dbReference type="Pfam" id="PF01746">
    <property type="entry name" value="tRNA_m1G_MT"/>
    <property type="match status" value="1"/>
</dbReference>
<dbReference type="PIRSF" id="PIRSF000386">
    <property type="entry name" value="tRNA_mtase"/>
    <property type="match status" value="1"/>
</dbReference>
<dbReference type="SUPFAM" id="SSF75217">
    <property type="entry name" value="alpha/beta knot"/>
    <property type="match status" value="1"/>
</dbReference>
<name>TRMD_BRUAB</name>
<protein>
    <recommendedName>
        <fullName evidence="1">tRNA (guanine-N(1)-)-methyltransferase</fullName>
        <ecNumber evidence="1">2.1.1.228</ecNumber>
    </recommendedName>
    <alternativeName>
        <fullName evidence="1">M1G-methyltransferase</fullName>
    </alternativeName>
    <alternativeName>
        <fullName evidence="1">tRNA [GM37] methyltransferase</fullName>
    </alternativeName>
</protein>
<organism>
    <name type="scientific">Brucella abortus biovar 1 (strain 9-941)</name>
    <dbReference type="NCBI Taxonomy" id="262698"/>
    <lineage>
        <taxon>Bacteria</taxon>
        <taxon>Pseudomonadati</taxon>
        <taxon>Pseudomonadota</taxon>
        <taxon>Alphaproteobacteria</taxon>
        <taxon>Hyphomicrobiales</taxon>
        <taxon>Brucellaceae</taxon>
        <taxon>Brucella/Ochrobactrum group</taxon>
        <taxon>Brucella</taxon>
    </lineage>
</organism>